<evidence type="ECO:0000255" key="1">
    <source>
        <dbReference type="PROSITE-ProRule" id="PRU00468"/>
    </source>
</evidence>
<evidence type="ECO:0000256" key="2">
    <source>
        <dbReference type="SAM" id="MobiDB-lite"/>
    </source>
</evidence>
<evidence type="ECO:0000269" key="3">
    <source>
    </source>
</evidence>
<reference key="1">
    <citation type="journal article" date="2002" name="Nature">
        <title>The genome sequence of Schizosaccharomyces pombe.</title>
        <authorList>
            <person name="Wood V."/>
            <person name="Gwilliam R."/>
            <person name="Rajandream M.A."/>
            <person name="Lyne M.H."/>
            <person name="Lyne R."/>
            <person name="Stewart A."/>
            <person name="Sgouros J.G."/>
            <person name="Peat N."/>
            <person name="Hayles J."/>
            <person name="Baker S.G."/>
            <person name="Basham D."/>
            <person name="Bowman S."/>
            <person name="Brooks K."/>
            <person name="Brown D."/>
            <person name="Brown S."/>
            <person name="Chillingworth T."/>
            <person name="Churcher C.M."/>
            <person name="Collins M."/>
            <person name="Connor R."/>
            <person name="Cronin A."/>
            <person name="Davis P."/>
            <person name="Feltwell T."/>
            <person name="Fraser A."/>
            <person name="Gentles S."/>
            <person name="Goble A."/>
            <person name="Hamlin N."/>
            <person name="Harris D.E."/>
            <person name="Hidalgo J."/>
            <person name="Hodgson G."/>
            <person name="Holroyd S."/>
            <person name="Hornsby T."/>
            <person name="Howarth S."/>
            <person name="Huckle E.J."/>
            <person name="Hunt S."/>
            <person name="Jagels K."/>
            <person name="James K.D."/>
            <person name="Jones L."/>
            <person name="Jones M."/>
            <person name="Leather S."/>
            <person name="McDonald S."/>
            <person name="McLean J."/>
            <person name="Mooney P."/>
            <person name="Moule S."/>
            <person name="Mungall K.L."/>
            <person name="Murphy L.D."/>
            <person name="Niblett D."/>
            <person name="Odell C."/>
            <person name="Oliver K."/>
            <person name="O'Neil S."/>
            <person name="Pearson D."/>
            <person name="Quail M.A."/>
            <person name="Rabbinowitsch E."/>
            <person name="Rutherford K.M."/>
            <person name="Rutter S."/>
            <person name="Saunders D."/>
            <person name="Seeger K."/>
            <person name="Sharp S."/>
            <person name="Skelton J."/>
            <person name="Simmonds M.N."/>
            <person name="Squares R."/>
            <person name="Squares S."/>
            <person name="Stevens K."/>
            <person name="Taylor K."/>
            <person name="Taylor R.G."/>
            <person name="Tivey A."/>
            <person name="Walsh S.V."/>
            <person name="Warren T."/>
            <person name="Whitehead S."/>
            <person name="Woodward J.R."/>
            <person name="Volckaert G."/>
            <person name="Aert R."/>
            <person name="Robben J."/>
            <person name="Grymonprez B."/>
            <person name="Weltjens I."/>
            <person name="Vanstreels E."/>
            <person name="Rieger M."/>
            <person name="Schaefer M."/>
            <person name="Mueller-Auer S."/>
            <person name="Gabel C."/>
            <person name="Fuchs M."/>
            <person name="Duesterhoeft A."/>
            <person name="Fritzc C."/>
            <person name="Holzer E."/>
            <person name="Moestl D."/>
            <person name="Hilbert H."/>
            <person name="Borzym K."/>
            <person name="Langer I."/>
            <person name="Beck A."/>
            <person name="Lehrach H."/>
            <person name="Reinhardt R."/>
            <person name="Pohl T.M."/>
            <person name="Eger P."/>
            <person name="Zimmermann W."/>
            <person name="Wedler H."/>
            <person name="Wambutt R."/>
            <person name="Purnelle B."/>
            <person name="Goffeau A."/>
            <person name="Cadieu E."/>
            <person name="Dreano S."/>
            <person name="Gloux S."/>
            <person name="Lelaure V."/>
            <person name="Mottier S."/>
            <person name="Galibert F."/>
            <person name="Aves S.J."/>
            <person name="Xiang Z."/>
            <person name="Hunt C."/>
            <person name="Moore K."/>
            <person name="Hurst S.M."/>
            <person name="Lucas M."/>
            <person name="Rochet M."/>
            <person name="Gaillardin C."/>
            <person name="Tallada V.A."/>
            <person name="Garzon A."/>
            <person name="Thode G."/>
            <person name="Daga R.R."/>
            <person name="Cruzado L."/>
            <person name="Jimenez J."/>
            <person name="Sanchez M."/>
            <person name="del Rey F."/>
            <person name="Benito J."/>
            <person name="Dominguez A."/>
            <person name="Revuelta J.L."/>
            <person name="Moreno S."/>
            <person name="Armstrong J."/>
            <person name="Forsburg S.L."/>
            <person name="Cerutti L."/>
            <person name="Lowe T."/>
            <person name="McCombie W.R."/>
            <person name="Paulsen I."/>
            <person name="Potashkin J."/>
            <person name="Shpakovski G.V."/>
            <person name="Ussery D."/>
            <person name="Barrell B.G."/>
            <person name="Nurse P."/>
        </authorList>
    </citation>
    <scope>NUCLEOTIDE SEQUENCE [LARGE SCALE GENOMIC DNA]</scope>
    <source>
        <strain>972 / ATCC 24843</strain>
    </source>
</reference>
<reference key="2">
    <citation type="journal article" date="2006" name="Nat. Biotechnol.">
        <title>ORFeome cloning and global analysis of protein localization in the fission yeast Schizosaccharomyces pombe.</title>
        <authorList>
            <person name="Matsuyama A."/>
            <person name="Arai R."/>
            <person name="Yashiroda Y."/>
            <person name="Shirai A."/>
            <person name="Kamata A."/>
            <person name="Sekido S."/>
            <person name="Kobayashi Y."/>
            <person name="Hashimoto A."/>
            <person name="Hamamoto M."/>
            <person name="Hiraoka Y."/>
            <person name="Horinouchi S."/>
            <person name="Yoshida M."/>
        </authorList>
    </citation>
    <scope>SUBCELLULAR LOCATION [LARGE SCALE ANALYSIS]</scope>
</reference>
<sequence>MASEQSNPRLPRRPPYMAEKARATLKEAFPNTDDAIIRAVLAASGYKLEPAFNALLGLSDPQVAEEMEQAETSYAYDTAAHDDPVQRQLEEDERCARELANRYNSHRPERRRKTNNDRRNYPPQNRTAKPNDNDGDDYSFFEDDLPVIKDTFMRGFQSFKQRSMEWVENIASKFDGEEEDDDDEKYSAPSKIYPSPRRSTAATLESAYEERPPSLPRRKPSRPGTAITLPPYESDPHMLNEKDFERLRLESSSSPMMRRSSLNSNRRSVESSSSAAFVEGQSFILDSNGAIEVANSAFALDDSDLESAYNEELEMKKDTSKPTASTKEVVVEKKPDESRKQAARTLETVSEEQMGSSNAKSKVLTSEPKDSTSVEAEKTETDEPAVGKGASDVSDTAEISEKTEAKNADSEANLEEKSDVGEEKESKDENNKASLHKDVEEKDTKITNEDTGKTETDVKAKETDSIEANDKDEKTDSKETEDKVEETESKEADVKAKETDSIEVDDKEEKTDSKETADKVEQTDSKDTNEKPAKDDNKEANEKAEKVDSKDVKEKIEEAADLQNSGKET</sequence>
<name>CUE5_SCHPO</name>
<gene>
    <name type="ORF">SPBC16E9.02c</name>
</gene>
<organism>
    <name type="scientific">Schizosaccharomyces pombe (strain 972 / ATCC 24843)</name>
    <name type="common">Fission yeast</name>
    <dbReference type="NCBI Taxonomy" id="284812"/>
    <lineage>
        <taxon>Eukaryota</taxon>
        <taxon>Fungi</taxon>
        <taxon>Dikarya</taxon>
        <taxon>Ascomycota</taxon>
        <taxon>Taphrinomycotina</taxon>
        <taxon>Schizosaccharomycetes</taxon>
        <taxon>Schizosaccharomycetales</taxon>
        <taxon>Schizosaccharomycetaceae</taxon>
        <taxon>Schizosaccharomyces</taxon>
    </lineage>
</organism>
<accession>O14319</accession>
<keyword id="KW-0963">Cytoplasm</keyword>
<keyword id="KW-1185">Reference proteome</keyword>
<keyword id="KW-0833">Ubl conjugation pathway</keyword>
<comment type="subcellular location">
    <subcellularLocation>
        <location evidence="3">Cytoplasm</location>
    </subcellularLocation>
</comment>
<dbReference type="EMBL" id="CU329671">
    <property type="protein sequence ID" value="CAB16895.1"/>
    <property type="molecule type" value="Genomic_DNA"/>
</dbReference>
<dbReference type="PIR" id="T39577">
    <property type="entry name" value="T39577"/>
</dbReference>
<dbReference type="RefSeq" id="NP_595784.1">
    <property type="nucleotide sequence ID" value="NM_001021685.2"/>
</dbReference>
<dbReference type="SMR" id="O14319"/>
<dbReference type="BioGRID" id="276359">
    <property type="interactions" value="13"/>
</dbReference>
<dbReference type="STRING" id="284812.O14319"/>
<dbReference type="iPTMnet" id="O14319"/>
<dbReference type="PaxDb" id="4896-SPBC16E9.02c.1"/>
<dbReference type="EnsemblFungi" id="SPBC16E9.02c.1">
    <property type="protein sequence ID" value="SPBC16E9.02c.1:pep"/>
    <property type="gene ID" value="SPBC16E9.02c"/>
</dbReference>
<dbReference type="KEGG" id="spo:2539809"/>
<dbReference type="PomBase" id="SPBC16E9.02c"/>
<dbReference type="VEuPathDB" id="FungiDB:SPBC16E9.02c"/>
<dbReference type="eggNOG" id="KOG0504">
    <property type="taxonomic scope" value="Eukaryota"/>
</dbReference>
<dbReference type="HOGENOM" id="CLU_034772_0_0_1"/>
<dbReference type="InParanoid" id="O14319"/>
<dbReference type="PhylomeDB" id="O14319"/>
<dbReference type="PRO" id="PR:O14319"/>
<dbReference type="Proteomes" id="UP000002485">
    <property type="component" value="Chromosome II"/>
</dbReference>
<dbReference type="GO" id="GO:0005737">
    <property type="term" value="C:cytoplasm"/>
    <property type="evidence" value="ECO:0007005"/>
    <property type="project" value="PomBase"/>
</dbReference>
<dbReference type="GO" id="GO:0043130">
    <property type="term" value="F:ubiquitin binding"/>
    <property type="evidence" value="ECO:0007669"/>
    <property type="project" value="InterPro"/>
</dbReference>
<dbReference type="GO" id="GO:0007165">
    <property type="term" value="P:signal transduction"/>
    <property type="evidence" value="ECO:0000250"/>
    <property type="project" value="PomBase"/>
</dbReference>
<dbReference type="CDD" id="cd14372">
    <property type="entry name" value="CUE_Cue5p_like"/>
    <property type="match status" value="1"/>
</dbReference>
<dbReference type="FunFam" id="1.10.8.10:FF:000064">
    <property type="entry name" value="Similar to CUE domain-containing protein"/>
    <property type="match status" value="1"/>
</dbReference>
<dbReference type="Gene3D" id="1.10.8.10">
    <property type="entry name" value="DNA helicase RuvA subunit, C-terminal domain"/>
    <property type="match status" value="1"/>
</dbReference>
<dbReference type="InterPro" id="IPR003892">
    <property type="entry name" value="CUE"/>
</dbReference>
<dbReference type="InterPro" id="IPR041807">
    <property type="entry name" value="Cue5/Don1_CUE"/>
</dbReference>
<dbReference type="InterPro" id="IPR009060">
    <property type="entry name" value="UBA-like_sf"/>
</dbReference>
<dbReference type="PANTHER" id="PTHR16461">
    <property type="entry name" value="TOLL-INTERACTING PROTEIN"/>
    <property type="match status" value="1"/>
</dbReference>
<dbReference type="PANTHER" id="PTHR16461:SF5">
    <property type="entry name" value="TOLL-INTERACTING PROTEIN"/>
    <property type="match status" value="1"/>
</dbReference>
<dbReference type="Pfam" id="PF02845">
    <property type="entry name" value="CUE"/>
    <property type="match status" value="1"/>
</dbReference>
<dbReference type="SMART" id="SM00546">
    <property type="entry name" value="CUE"/>
    <property type="match status" value="1"/>
</dbReference>
<dbReference type="SUPFAM" id="SSF46934">
    <property type="entry name" value="UBA-like"/>
    <property type="match status" value="1"/>
</dbReference>
<dbReference type="PROSITE" id="PS51140">
    <property type="entry name" value="CUE"/>
    <property type="match status" value="1"/>
</dbReference>
<proteinExistence type="predicted"/>
<feature type="chain" id="PRO_0000310345" description="CUE domain-containing protein 5">
    <location>
        <begin position="1"/>
        <end position="569"/>
    </location>
</feature>
<feature type="domain" description="CUE" evidence="1">
    <location>
        <begin position="17"/>
        <end position="60"/>
    </location>
</feature>
<feature type="region of interest" description="Disordered" evidence="2">
    <location>
        <begin position="67"/>
        <end position="139"/>
    </location>
</feature>
<feature type="region of interest" description="Disordered" evidence="2">
    <location>
        <begin position="175"/>
        <end position="275"/>
    </location>
</feature>
<feature type="region of interest" description="Disordered" evidence="2">
    <location>
        <begin position="311"/>
        <end position="569"/>
    </location>
</feature>
<feature type="compositionally biased region" description="Basic and acidic residues" evidence="2">
    <location>
        <begin position="79"/>
        <end position="100"/>
    </location>
</feature>
<feature type="compositionally biased region" description="Basic residues" evidence="2">
    <location>
        <begin position="104"/>
        <end position="113"/>
    </location>
</feature>
<feature type="compositionally biased region" description="Basic and acidic residues" evidence="2">
    <location>
        <begin position="234"/>
        <end position="249"/>
    </location>
</feature>
<feature type="compositionally biased region" description="Low complexity" evidence="2">
    <location>
        <begin position="250"/>
        <end position="274"/>
    </location>
</feature>
<feature type="compositionally biased region" description="Basic and acidic residues" evidence="2">
    <location>
        <begin position="329"/>
        <end position="340"/>
    </location>
</feature>
<feature type="compositionally biased region" description="Polar residues" evidence="2">
    <location>
        <begin position="347"/>
        <end position="364"/>
    </location>
</feature>
<feature type="compositionally biased region" description="Basic and acidic residues" evidence="2">
    <location>
        <begin position="367"/>
        <end position="381"/>
    </location>
</feature>
<feature type="compositionally biased region" description="Basic and acidic residues" evidence="2">
    <location>
        <begin position="399"/>
        <end position="500"/>
    </location>
</feature>
<feature type="compositionally biased region" description="Basic and acidic residues" evidence="2">
    <location>
        <begin position="507"/>
        <end position="558"/>
    </location>
</feature>
<protein>
    <recommendedName>
        <fullName>CUE domain-containing protein 5</fullName>
    </recommendedName>
</protein>